<comment type="function">
    <text evidence="1">With LigD forms a non-homologous end joining (NHEJ) DNA repair enzyme, which repairs dsDNA breaks with reduced fidelity. Binds linear dsDNA with 5'- and 3'- overhangs but not closed circular dsDNA nor ssDNA. Recruits and stimulates the ligase activity of LigD.</text>
</comment>
<comment type="subunit">
    <text evidence="1">Homodimer. Interacts with LigD.</text>
</comment>
<comment type="similarity">
    <text evidence="1">Belongs to the prokaryotic Ku family.</text>
</comment>
<evidence type="ECO:0000255" key="1">
    <source>
        <dbReference type="HAMAP-Rule" id="MF_01875"/>
    </source>
</evidence>
<evidence type="ECO:0000256" key="2">
    <source>
        <dbReference type="SAM" id="MobiDB-lite"/>
    </source>
</evidence>
<accession>Q87ZG4</accession>
<name>KU_PSESM</name>
<keyword id="KW-0227">DNA damage</keyword>
<keyword id="KW-0233">DNA recombination</keyword>
<keyword id="KW-0234">DNA repair</keyword>
<keyword id="KW-0238">DNA-binding</keyword>
<keyword id="KW-1185">Reference proteome</keyword>
<dbReference type="EMBL" id="AE016853">
    <property type="protein sequence ID" value="AAO56940.1"/>
    <property type="molecule type" value="Genomic_DNA"/>
</dbReference>
<dbReference type="RefSeq" id="NP_793245.1">
    <property type="nucleotide sequence ID" value="NC_004578.1"/>
</dbReference>
<dbReference type="RefSeq" id="WP_011104573.1">
    <property type="nucleotide sequence ID" value="NC_004578.1"/>
</dbReference>
<dbReference type="SMR" id="Q87ZG4"/>
<dbReference type="STRING" id="223283.PSPTO_3465"/>
<dbReference type="DNASU" id="1185130"/>
<dbReference type="GeneID" id="1185130"/>
<dbReference type="KEGG" id="pst:PSPTO_3465"/>
<dbReference type="PATRIC" id="fig|223283.9.peg.3546"/>
<dbReference type="eggNOG" id="COG1273">
    <property type="taxonomic scope" value="Bacteria"/>
</dbReference>
<dbReference type="HOGENOM" id="CLU_048975_2_0_6"/>
<dbReference type="OrthoDB" id="9795084at2"/>
<dbReference type="PhylomeDB" id="Q87ZG4"/>
<dbReference type="Proteomes" id="UP000002515">
    <property type="component" value="Chromosome"/>
</dbReference>
<dbReference type="GO" id="GO:0003690">
    <property type="term" value="F:double-stranded DNA binding"/>
    <property type="evidence" value="ECO:0007669"/>
    <property type="project" value="UniProtKB-UniRule"/>
</dbReference>
<dbReference type="GO" id="GO:0006310">
    <property type="term" value="P:DNA recombination"/>
    <property type="evidence" value="ECO:0007669"/>
    <property type="project" value="UniProtKB-KW"/>
</dbReference>
<dbReference type="GO" id="GO:0006303">
    <property type="term" value="P:double-strand break repair via nonhomologous end joining"/>
    <property type="evidence" value="ECO:0007669"/>
    <property type="project" value="UniProtKB-UniRule"/>
</dbReference>
<dbReference type="CDD" id="cd00789">
    <property type="entry name" value="KU_like"/>
    <property type="match status" value="1"/>
</dbReference>
<dbReference type="Gene3D" id="2.40.290.10">
    <property type="match status" value="1"/>
</dbReference>
<dbReference type="HAMAP" id="MF_01875">
    <property type="entry name" value="Prokaryotic_Ku"/>
    <property type="match status" value="1"/>
</dbReference>
<dbReference type="InterPro" id="IPR006164">
    <property type="entry name" value="Ku70/Ku80_beta-barrel_dom"/>
</dbReference>
<dbReference type="InterPro" id="IPR009187">
    <property type="entry name" value="Prok_Ku"/>
</dbReference>
<dbReference type="InterPro" id="IPR016194">
    <property type="entry name" value="SPOC-like_C_dom_sf"/>
</dbReference>
<dbReference type="NCBIfam" id="TIGR02772">
    <property type="entry name" value="Ku_bact"/>
    <property type="match status" value="1"/>
</dbReference>
<dbReference type="PANTHER" id="PTHR41251">
    <property type="entry name" value="NON-HOMOLOGOUS END JOINING PROTEIN KU"/>
    <property type="match status" value="1"/>
</dbReference>
<dbReference type="PANTHER" id="PTHR41251:SF1">
    <property type="entry name" value="NON-HOMOLOGOUS END JOINING PROTEIN KU"/>
    <property type="match status" value="1"/>
</dbReference>
<dbReference type="Pfam" id="PF02735">
    <property type="entry name" value="Ku"/>
    <property type="match status" value="1"/>
</dbReference>
<dbReference type="PIRSF" id="PIRSF006493">
    <property type="entry name" value="Prok_Ku"/>
    <property type="match status" value="1"/>
</dbReference>
<dbReference type="SMART" id="SM00559">
    <property type="entry name" value="Ku78"/>
    <property type="match status" value="1"/>
</dbReference>
<dbReference type="SUPFAM" id="SSF100939">
    <property type="entry name" value="SPOC domain-like"/>
    <property type="match status" value="1"/>
</dbReference>
<protein>
    <recommendedName>
        <fullName evidence="1">Non-homologous end joining protein Ku</fullName>
    </recommendedName>
</protein>
<gene>
    <name evidence="1" type="primary">ku</name>
    <name type="ordered locus">PSPTO_3465</name>
</gene>
<feature type="chain" id="PRO_0000389192" description="Non-homologous end joining protein Ku">
    <location>
        <begin position="1"/>
        <end position="299"/>
    </location>
</feature>
<feature type="domain" description="Ku" evidence="1">
    <location>
        <begin position="10"/>
        <end position="188"/>
    </location>
</feature>
<feature type="region of interest" description="Disordered" evidence="2">
    <location>
        <begin position="227"/>
        <end position="249"/>
    </location>
</feature>
<feature type="region of interest" description="Disordered" evidence="2">
    <location>
        <begin position="261"/>
        <end position="299"/>
    </location>
</feature>
<feature type="compositionally biased region" description="Basic and acidic residues" evidence="2">
    <location>
        <begin position="273"/>
        <end position="283"/>
    </location>
</feature>
<feature type="compositionally biased region" description="Basic residues" evidence="2">
    <location>
        <begin position="284"/>
        <end position="299"/>
    </location>
</feature>
<reference key="1">
    <citation type="journal article" date="2003" name="Proc. Natl. Acad. Sci. U.S.A.">
        <title>The complete genome sequence of the Arabidopsis and tomato pathogen Pseudomonas syringae pv. tomato DC3000.</title>
        <authorList>
            <person name="Buell C.R."/>
            <person name="Joardar V."/>
            <person name="Lindeberg M."/>
            <person name="Selengut J."/>
            <person name="Paulsen I.T."/>
            <person name="Gwinn M.L."/>
            <person name="Dodson R.J."/>
            <person name="DeBoy R.T."/>
            <person name="Durkin A.S."/>
            <person name="Kolonay J.F."/>
            <person name="Madupu R."/>
            <person name="Daugherty S.C."/>
            <person name="Brinkac L.M."/>
            <person name="Beanan M.J."/>
            <person name="Haft D.H."/>
            <person name="Nelson W.C."/>
            <person name="Davidsen T.M."/>
            <person name="Zafar N."/>
            <person name="Zhou L."/>
            <person name="Liu J."/>
            <person name="Yuan Q."/>
            <person name="Khouri H.M."/>
            <person name="Fedorova N.B."/>
            <person name="Tran B."/>
            <person name="Russell D."/>
            <person name="Berry K.J."/>
            <person name="Utterback T.R."/>
            <person name="Van Aken S.E."/>
            <person name="Feldblyum T.V."/>
            <person name="D'Ascenzo M."/>
            <person name="Deng W.-L."/>
            <person name="Ramos A.R."/>
            <person name="Alfano J.R."/>
            <person name="Cartinhour S."/>
            <person name="Chatterjee A.K."/>
            <person name="Delaney T.P."/>
            <person name="Lazarowitz S.G."/>
            <person name="Martin G.B."/>
            <person name="Schneider D.J."/>
            <person name="Tang X."/>
            <person name="Bender C.L."/>
            <person name="White O."/>
            <person name="Fraser C.M."/>
            <person name="Collmer A."/>
        </authorList>
    </citation>
    <scope>NUCLEOTIDE SEQUENCE [LARGE SCALE GENOMIC DNA]</scope>
    <source>
        <strain>ATCC BAA-871 / DC3000</strain>
    </source>
</reference>
<sequence>MARAIWKGAISFGLVHIPVALVSATTSNSVDFDWLDKRSMDPVGYKRINKVTGKEVTKENIVKGVLHEKDRYVVLSEEEIRSAHPKSTQTIDIFAFVDSQQIPLQNIDTPYFLTPDKRGEKVYALLRETLVDTQKVALANVVLHTREHLAAVMPLESALVMVILRWPADVRELDALELTEAVTDARLTKSERDMARRLVKDMSADWQPDQYHDTFQEKIMQLVQTKAGEGKIEDVETDPGEEERKSADVIDLTDLLRRSLAGKSSASKTRKPAAKDKVADKQSPKPKRPAVRKKTGKAS</sequence>
<proteinExistence type="inferred from homology"/>
<organism>
    <name type="scientific">Pseudomonas syringae pv. tomato (strain ATCC BAA-871 / DC3000)</name>
    <dbReference type="NCBI Taxonomy" id="223283"/>
    <lineage>
        <taxon>Bacteria</taxon>
        <taxon>Pseudomonadati</taxon>
        <taxon>Pseudomonadota</taxon>
        <taxon>Gammaproteobacteria</taxon>
        <taxon>Pseudomonadales</taxon>
        <taxon>Pseudomonadaceae</taxon>
        <taxon>Pseudomonas</taxon>
    </lineage>
</organism>